<feature type="initiator methionine" description="Removed" evidence="2">
    <location>
        <position position="1"/>
    </location>
</feature>
<feature type="chain" id="PRO_0000455608" description="NAD-dependent protein deacylase sirtuin-6">
    <location>
        <begin position="2"/>
        <end position="355"/>
    </location>
</feature>
<feature type="domain" description="Deacetylase sirtuin-type" evidence="3">
    <location>
        <begin position="27"/>
        <end position="272"/>
    </location>
</feature>
<feature type="region of interest" description="Disordered" evidence="4">
    <location>
        <begin position="284"/>
        <end position="355"/>
    </location>
</feature>
<feature type="compositionally biased region" description="Pro residues" evidence="4">
    <location>
        <begin position="287"/>
        <end position="296"/>
    </location>
</feature>
<feature type="active site" description="Proton acceptor" evidence="3">
    <location>
        <position position="133"/>
    </location>
</feature>
<feature type="binding site" evidence="2">
    <location>
        <position position="53"/>
    </location>
    <ligand>
        <name>NAD(+)</name>
        <dbReference type="ChEBI" id="CHEBI:57540"/>
    </ligand>
</feature>
<feature type="binding site" evidence="2">
    <location>
        <position position="57"/>
    </location>
    <ligand>
        <name>NAD(+)</name>
        <dbReference type="ChEBI" id="CHEBI:57540"/>
    </ligand>
</feature>
<feature type="binding site" evidence="2">
    <location>
        <position position="64"/>
    </location>
    <ligand>
        <name>NAD(+)</name>
        <dbReference type="ChEBI" id="CHEBI:57540"/>
    </ligand>
</feature>
<feature type="binding site" evidence="2">
    <location>
        <position position="65"/>
    </location>
    <ligand>
        <name>NAD(+)</name>
        <dbReference type="ChEBI" id="CHEBI:57540"/>
    </ligand>
</feature>
<feature type="binding site" evidence="2">
    <location>
        <position position="71"/>
    </location>
    <ligand>
        <name>NAD(+)</name>
        <dbReference type="ChEBI" id="CHEBI:57540"/>
    </ligand>
</feature>
<feature type="binding site" evidence="2">
    <location>
        <position position="113"/>
    </location>
    <ligand>
        <name>NAD(+)</name>
        <dbReference type="ChEBI" id="CHEBI:57540"/>
    </ligand>
</feature>
<feature type="binding site" evidence="2">
    <location>
        <position position="133"/>
    </location>
    <ligand>
        <name>NAD(+)</name>
        <dbReference type="ChEBI" id="CHEBI:57540"/>
    </ligand>
</feature>
<feature type="binding site" evidence="2 3">
    <location>
        <position position="141"/>
    </location>
    <ligand>
        <name>Zn(2+)</name>
        <dbReference type="ChEBI" id="CHEBI:29105"/>
    </ligand>
</feature>
<feature type="binding site" evidence="2 3">
    <location>
        <position position="144"/>
    </location>
    <ligand>
        <name>Zn(2+)</name>
        <dbReference type="ChEBI" id="CHEBI:29105"/>
    </ligand>
</feature>
<feature type="binding site" evidence="2 3">
    <location>
        <position position="166"/>
    </location>
    <ligand>
        <name>Zn(2+)</name>
        <dbReference type="ChEBI" id="CHEBI:29105"/>
    </ligand>
</feature>
<feature type="binding site" evidence="2 3">
    <location>
        <position position="177"/>
    </location>
    <ligand>
        <name>Zn(2+)</name>
        <dbReference type="ChEBI" id="CHEBI:29105"/>
    </ligand>
</feature>
<feature type="binding site" evidence="2">
    <location>
        <position position="214"/>
    </location>
    <ligand>
        <name>NAD(+)</name>
        <dbReference type="ChEBI" id="CHEBI:57540"/>
    </ligand>
</feature>
<feature type="binding site" evidence="2">
    <location>
        <position position="216"/>
    </location>
    <ligand>
        <name>NAD(+)</name>
        <dbReference type="ChEBI" id="CHEBI:57540"/>
    </ligand>
</feature>
<feature type="binding site" evidence="2">
    <location>
        <position position="240"/>
    </location>
    <ligand>
        <name>NAD(+)</name>
        <dbReference type="ChEBI" id="CHEBI:57540"/>
    </ligand>
</feature>
<feature type="binding site" evidence="2">
    <location>
        <position position="242"/>
    </location>
    <ligand>
        <name>NAD(+)</name>
        <dbReference type="ChEBI" id="CHEBI:57540"/>
    </ligand>
</feature>
<feature type="binding site" evidence="2">
    <location>
        <position position="258"/>
    </location>
    <ligand>
        <name>NAD(+)</name>
        <dbReference type="ChEBI" id="CHEBI:57540"/>
    </ligand>
</feature>
<feature type="modified residue" description="N-acetylserine" evidence="2">
    <location>
        <position position="2"/>
    </location>
</feature>
<feature type="modified residue" description="Phosphoserine" evidence="2">
    <location>
        <position position="10"/>
    </location>
</feature>
<feature type="modified residue" description="N6-acetyllysine" evidence="2">
    <location>
        <position position="33"/>
    </location>
</feature>
<feature type="modified residue" description="Phosphothreonine" evidence="2">
    <location>
        <position position="294"/>
    </location>
</feature>
<feature type="modified residue" description="Phosphoserine" evidence="2">
    <location>
        <position position="303"/>
    </location>
</feature>
<feature type="modified residue" description="Phosphoserine" evidence="2">
    <location>
        <position position="330"/>
    </location>
</feature>
<feature type="cross-link" description="Glycyl lysine isopeptide (Lys-Gly) (interchain with G-Cter in ubiquitin)" evidence="2">
    <location>
        <position position="170"/>
    </location>
</feature>
<keyword id="KW-0007">Acetylation</keyword>
<keyword id="KW-0012">Acyltransferase</keyword>
<keyword id="KW-0156">Chromatin regulator</keyword>
<keyword id="KW-0158">Chromosome</keyword>
<keyword id="KW-0217">Developmental protein</keyword>
<keyword id="KW-0227">DNA damage</keyword>
<keyword id="KW-0234">DNA repair</keyword>
<keyword id="KW-0238">DNA-binding</keyword>
<keyword id="KW-0256">Endoplasmic reticulum</keyword>
<keyword id="KW-0328">Glycosyltransferase</keyword>
<keyword id="KW-1017">Isopeptide bond</keyword>
<keyword id="KW-0479">Metal-binding</keyword>
<keyword id="KW-0520">NAD</keyword>
<keyword id="KW-0548">Nucleotidyltransferase</keyword>
<keyword id="KW-0539">Nucleus</keyword>
<keyword id="KW-0597">Phosphoprotein</keyword>
<keyword id="KW-1185">Reference proteome</keyword>
<keyword id="KW-0694">RNA-binding</keyword>
<keyword id="KW-0779">Telomere</keyword>
<keyword id="KW-0808">Transferase</keyword>
<keyword id="KW-0043">Tumor suppressor</keyword>
<keyword id="KW-0832">Ubl conjugation</keyword>
<keyword id="KW-0862">Zinc</keyword>
<gene>
    <name evidence="6" type="primary">SIRT6</name>
</gene>
<sequence>MSVNYAAGLSPYADKGKCGLPEIFDPPEELERKVWELARLVWQSSHVVFHTGAGISTASGIPDFRGPHGVWTMEERGLAPKFDTTFESARPTQTHMALVQLERVGLLRFLVSQNVDGLHVRSGFPRDKLAELHGNMFVEECAKCKTQYVRDTVVGTMGLKATGRLCTVAKARGLRACRGELRDTILDWEDSLPDRDLALADEASRNADLSITLGTSLQIRPSGNLPLATKRRGGRLVIVNLQPTKHDRHADLRIHGYVDEVMTRLMKHLGLEIPAWDGPHVLERALPPLPRPPTPKLEPKEESPTRINGSIPAGSCLEPCAQHNGSEPASPKRERPTSPAPNRPPKRVKAEAVPS</sequence>
<evidence type="ECO:0000250" key="1">
    <source>
        <dbReference type="UniProtKB" id="P59941"/>
    </source>
</evidence>
<evidence type="ECO:0000250" key="2">
    <source>
        <dbReference type="UniProtKB" id="Q8N6T7"/>
    </source>
</evidence>
<evidence type="ECO:0000255" key="3">
    <source>
        <dbReference type="PROSITE-ProRule" id="PRU00236"/>
    </source>
</evidence>
<evidence type="ECO:0000256" key="4">
    <source>
        <dbReference type="SAM" id="MobiDB-lite"/>
    </source>
</evidence>
<evidence type="ECO:0000269" key="5">
    <source>
    </source>
</evidence>
<evidence type="ECO:0000303" key="6">
    <source>
    </source>
</evidence>
<evidence type="ECO:0000305" key="7"/>
<reference key="1">
    <citation type="submission" date="2013-03" db="EMBL/GenBank/DDBJ databases">
        <authorList>
            <person name="Warren W."/>
            <person name="Wilson R.K."/>
        </authorList>
    </citation>
    <scope>NUCLEOTIDE SEQUENCE [LARGE SCALE GENOMIC DNA]</scope>
</reference>
<reference key="2">
    <citation type="journal article" date="2018" name="Nature">
        <title>SIRT6 deficiency results in developmental retardation in cynomolgus monkeys.</title>
        <authorList>
            <person name="Zhang W."/>
            <person name="Wan H."/>
            <person name="Feng G."/>
            <person name="Qu J."/>
            <person name="Wang J."/>
            <person name="Jing Y."/>
            <person name="Ren R."/>
            <person name="Liu Z."/>
            <person name="Zhang L."/>
            <person name="Chen Z."/>
            <person name="Wang S."/>
            <person name="Zhao Y."/>
            <person name="Wang Z."/>
            <person name="Yuan Y."/>
            <person name="Zhou Q."/>
            <person name="Li W."/>
            <person name="Liu G.H."/>
            <person name="Hu B."/>
        </authorList>
    </citation>
    <scope>FUNCTION</scope>
    <scope>CATALYTIC ACTIVITY</scope>
    <scope>DISRUPTION PHENOTYPE</scope>
</reference>
<organism>
    <name type="scientific">Macaca fascicularis</name>
    <name type="common">Crab-eating macaque</name>
    <name type="synonym">Cynomolgus monkey</name>
    <dbReference type="NCBI Taxonomy" id="9541"/>
    <lineage>
        <taxon>Eukaryota</taxon>
        <taxon>Metazoa</taxon>
        <taxon>Chordata</taxon>
        <taxon>Craniata</taxon>
        <taxon>Vertebrata</taxon>
        <taxon>Euteleostomi</taxon>
        <taxon>Mammalia</taxon>
        <taxon>Eutheria</taxon>
        <taxon>Euarchontoglires</taxon>
        <taxon>Primates</taxon>
        <taxon>Haplorrhini</taxon>
        <taxon>Catarrhini</taxon>
        <taxon>Cercopithecidae</taxon>
        <taxon>Cercopithecinae</taxon>
        <taxon>Macaca</taxon>
    </lineage>
</organism>
<protein>
    <recommendedName>
        <fullName evidence="7">NAD-dependent protein deacylase sirtuin-6</fullName>
        <ecNumber evidence="2">2.3.1.-</ecNumber>
    </recommendedName>
    <alternativeName>
        <fullName evidence="7">NAD-dependent protein deacetylase sirtuin-6</fullName>
        <ecNumber evidence="3 5">2.3.1.286</ecNumber>
    </alternativeName>
    <alternativeName>
        <fullName evidence="7">Protein mono-ADP-ribosyltransferase sirtuin-6</fullName>
        <ecNumber evidence="2">2.4.2.-</ecNumber>
    </alternativeName>
</protein>
<proteinExistence type="evidence at protein level"/>
<accession>A0A2K5TU92</accession>
<comment type="function">
    <text evidence="1 2 5">NAD-dependent protein deacetylase, deacylase and mono-ADP-ribosyltransferase that plays an essential role in DNA damage repair, telomere maintenance, metabolic homeostasis, inflammation, tumorigenesis and aging (PubMed:30135584). Displays protein-lysine deacetylase or defatty-acylase (demyristoylase and depalmitoylase) activity, depending on the context (By similarity). Acts as a key histone deacetylase by catalyzing deacetylation of histone H3 at 'Lys-9', 'Lys-18' and 'Lys-56' (H3K9ac, H3K18ac and H3K56ac, respectively), suppressing target gene expression of several transcription factors, including NF-kappa-B (PubMed:30135584). Acts as an inhibitor of transcription elongation by mediating deacetylation of H3K9ac and H3K56ac, preventing release of NELFE from chromatin and causing transcriptional pausing (By similarity). Involved in DNA repair by promoting double-strand break (DSB) repair: acts as a DSB sensor by recognizing and binding DSB sites, leading to (1) recruitment of DNA repair proteins, such as SMARCA5/SNF2H, and (2) deacetylation of histone H3K9ac and H3K56ac (By similarity). SIRT6 participation to DSB repair is probably involved in extension of life span (By similarity). Also promotes DNA repair by deacetylating non-histone proteins, such as DDB2 and p53/TP53 (By similarity). Specifically deacetylates H3K18ac at pericentric heterochromatin, thereby maintaining pericentric heterochromatin silencing at centromeres and protecting against genomic instability and cellular senescence (By similarity). Involved in telomere maintenance by catalyzing deacetylation of histone H3 in telomeric chromatin, regulating telomere position effect and telomere movement in response to DNA damage (By similarity). Required for embryonic stem cell differentiation by mediating histone deacetylation of H3K9ac (By similarity). Plays a major role in metabolism by regulating processes such as glycolysis, gluconeogenesis, insulin secretion and lipid metabolism (By similarity). Inhibits glycolysis via histone deacetylase activity and by acting as a corepressor of the transcription factor HIF1A, thereby controlling the expression of multiple glycolytic genes (By similarity). Has tumor suppressor activity by repressing glycolysis, thereby inhibiting the Warburg effect (By similarity). Also regulates glycolysis and tumorigenesis by mediating deacetylation and nuclear export of non-histone proteins, such as isoform M2 of PKM (PKM2) (By similarity). Acts as a negative regulator of gluconeogenesis by mediating deacetylation of non-histone proteins, such as FOXO1 and KAT2A/GCN5 (By similarity). Promotes beta-oxidation of fatty acids during fasting by catalyzing deacetylation of NCOA2, inducing coactivation of PPARA (By similarity). Acts as a regulator of lipid catabolism in brown adipocytes, both by catalyzing deacetylation of histones and non-histone proteins, such as FOXO1 (By similarity). Also acts as a regulator of circadian rhythms, both by regulating expression of clock-controlled genes involved in lipid and carbohydrate metabolism, and by catalyzing deacetylation of PER2 (By similarity). The defatty-acylase activity is specifically involved in regulation of protein secretion (By similarity). Has high activity toward long-chain fatty acyl groups and mediates protein-lysine demyristoylation and depalmitoylation of target proteins, such as RRAS2 and TNF, thereby regulating their secretion (By similarity). Also acts as a mono-ADP-ribosyltransferase by mediating mono-ADP-ribosylation of PARP1, TRIM28/KAP1 or SMARCC2/BAF170 (By similarity). Mono-ADP-ribosyltransferase activity is involved in DNA repair, cellular senescence, repression of LINE-1 retrotransposon elements and regulation of transcription (By similarity).</text>
</comment>
<comment type="catalytic activity">
    <reaction evidence="3 5">
        <text>N(6)-acetyl-L-lysyl-[protein] + NAD(+) + H2O = 2''-O-acetyl-ADP-D-ribose + nicotinamide + L-lysyl-[protein]</text>
        <dbReference type="Rhea" id="RHEA:43636"/>
        <dbReference type="Rhea" id="RHEA-COMP:9752"/>
        <dbReference type="Rhea" id="RHEA-COMP:10731"/>
        <dbReference type="ChEBI" id="CHEBI:15377"/>
        <dbReference type="ChEBI" id="CHEBI:17154"/>
        <dbReference type="ChEBI" id="CHEBI:29969"/>
        <dbReference type="ChEBI" id="CHEBI:57540"/>
        <dbReference type="ChEBI" id="CHEBI:61930"/>
        <dbReference type="ChEBI" id="CHEBI:83767"/>
        <dbReference type="EC" id="2.3.1.286"/>
    </reaction>
    <physiologicalReaction direction="left-to-right" evidence="5">
        <dbReference type="Rhea" id="RHEA:43637"/>
    </physiologicalReaction>
</comment>
<comment type="catalytic activity">
    <reaction evidence="2">
        <text>N(6)-tetradecanoyl-L-lysyl-[protein] + NAD(+) + H2O = 2''-O-tetradecanoyl-ADP-D-ribose + nicotinamide + L-lysyl-[protein]</text>
        <dbReference type="Rhea" id="RHEA:70567"/>
        <dbReference type="Rhea" id="RHEA-COMP:9752"/>
        <dbReference type="Rhea" id="RHEA-COMP:15437"/>
        <dbReference type="ChEBI" id="CHEBI:15377"/>
        <dbReference type="ChEBI" id="CHEBI:17154"/>
        <dbReference type="ChEBI" id="CHEBI:29969"/>
        <dbReference type="ChEBI" id="CHEBI:57540"/>
        <dbReference type="ChEBI" id="CHEBI:141129"/>
        <dbReference type="ChEBI" id="CHEBI:189674"/>
    </reaction>
    <physiologicalReaction direction="left-to-right" evidence="2">
        <dbReference type="Rhea" id="RHEA:70568"/>
    </physiologicalReaction>
</comment>
<comment type="catalytic activity">
    <reaction evidence="2">
        <text>N(6)-hexadecanoyl-L-lysyl-[protein] + NAD(+) + H2O = 2''-O-hexadecanoyl-ADP-D-ribose + nicotinamide + L-lysyl-[protein]</text>
        <dbReference type="Rhea" id="RHEA:70563"/>
        <dbReference type="Rhea" id="RHEA-COMP:9752"/>
        <dbReference type="Rhea" id="RHEA-COMP:14175"/>
        <dbReference type="ChEBI" id="CHEBI:15377"/>
        <dbReference type="ChEBI" id="CHEBI:17154"/>
        <dbReference type="ChEBI" id="CHEBI:29969"/>
        <dbReference type="ChEBI" id="CHEBI:57540"/>
        <dbReference type="ChEBI" id="CHEBI:138936"/>
        <dbReference type="ChEBI" id="CHEBI:189673"/>
    </reaction>
    <physiologicalReaction direction="left-to-right" evidence="2">
        <dbReference type="Rhea" id="RHEA:70564"/>
    </physiologicalReaction>
</comment>
<comment type="catalytic activity">
    <reaction evidence="1">
        <text>L-lysyl-[protein] + NAD(+) = N(6)-(ADP-D-ribosyl)-L-lysyl-[protein] + nicotinamide + H(+)</text>
        <dbReference type="Rhea" id="RHEA:58220"/>
        <dbReference type="Rhea" id="RHEA-COMP:9752"/>
        <dbReference type="Rhea" id="RHEA-COMP:15088"/>
        <dbReference type="ChEBI" id="CHEBI:15378"/>
        <dbReference type="ChEBI" id="CHEBI:17154"/>
        <dbReference type="ChEBI" id="CHEBI:29969"/>
        <dbReference type="ChEBI" id="CHEBI:57540"/>
        <dbReference type="ChEBI" id="CHEBI:142515"/>
    </reaction>
    <physiologicalReaction direction="left-to-right" evidence="1">
        <dbReference type="Rhea" id="RHEA:58221"/>
    </physiologicalReaction>
</comment>
<comment type="catalytic activity">
    <reaction evidence="1">
        <text>L-arginyl-[protein] + NAD(+) = N(omega)-(ADP-D-ribosyl)-L-arginyl-[protein] + nicotinamide + H(+)</text>
        <dbReference type="Rhea" id="RHEA:19149"/>
        <dbReference type="Rhea" id="RHEA-COMP:10532"/>
        <dbReference type="Rhea" id="RHEA-COMP:15087"/>
        <dbReference type="ChEBI" id="CHEBI:15378"/>
        <dbReference type="ChEBI" id="CHEBI:17154"/>
        <dbReference type="ChEBI" id="CHEBI:29965"/>
        <dbReference type="ChEBI" id="CHEBI:57540"/>
        <dbReference type="ChEBI" id="CHEBI:142554"/>
    </reaction>
    <physiologicalReaction direction="left-to-right" evidence="1">
        <dbReference type="Rhea" id="RHEA:19150"/>
    </physiologicalReaction>
</comment>
<comment type="activity regulation">
    <text evidence="2">Compared to the defatty-acylase activity, the protein deacetylase activity is weak in vitro, and requires activation. The histone deacetylase activity is strongly activated upon binding to nucleosomes and chromatin in vivo. Two molecules of SIRT6 associate with the acidic patch of one nucleosome, while the C-terminal disordered region of SIRT6 associates with nucleosomal DNA, leading to efficient histone deacetylation. The protein-lysine deacetylase activity is also activated by long-chain free fatty-acids.</text>
</comment>
<comment type="subunit">
    <text evidence="1 2">Homodimer; binds to nucleosomes and DNA ends as a homodimer (By similarity). Interacts with RELA; interferes with RELA binding to target DNA (By similarity). Interacts with SMARCA5; promoting recruitment of SMARCA5/SNF2H to double-strand breaks (DSBs) sites (By similarity). Interacts with the mTORC2 complex; preventing the ability of SIRT6 to deacetylate FOXO1. Interacts with the CLOCK-BMAL1 complex; recruited by the CLOCK-BMAL1 complex to regulate expression of clock-controlled genes. Interacts with CSNK2A2; preventing CSNK2A2 localization to the nucleus (By similarity).</text>
</comment>
<comment type="subcellular location">
    <subcellularLocation>
        <location evidence="1">Nucleus</location>
    </subcellularLocation>
    <subcellularLocation>
        <location evidence="2">Chromosome</location>
    </subcellularLocation>
    <subcellularLocation>
        <location evidence="2">Chromosome</location>
        <location evidence="2">Telomere</location>
    </subcellularLocation>
    <subcellularLocation>
        <location evidence="1">Endoplasmic reticulum</location>
    </subcellularLocation>
    <text evidence="1 2">Predominantly nuclear. Associated with pericentric heterochromatin and telomeric heterochromatin regions. Localizes to DNA damage sites: directly recognizes and binds double-strand breaks (DSBs) sites via a tunnel-like structure that has high affinity for DSBs (By similarity). A fraction localizes to the endoplasmic reticulum (By similarity).</text>
</comment>
<comment type="domain">
    <text evidence="2">The C-terminal disordered region mediates non-specific DNA-binding.</text>
</comment>
<comment type="PTM">
    <text evidence="2">Acetylated at Lys-33. Deacetylation at Lys-33 by SIRT1 promotes homomultimerization and binding to double-strand breaks (DSBs) sites.</text>
</comment>
<comment type="PTM">
    <text evidence="2">Phosphorylation at Ser-10 by MAPK8/JNK1 in response to oxidative stress stimulates the mono-ADP-ribosyltransferase activity on PARP1, leading to PARP1 recruitment to double-strand breaks (DSBs).</text>
</comment>
<comment type="PTM">
    <text evidence="2">Monoubiquitinated at Lys-170 by STUB1/CHIP, preventing its degradation by the proteasome.</text>
</comment>
<comment type="PTM">
    <text evidence="2">Sumoylated, leading to specifically decrease ability to deacetylate histone H3 at 'Lys-56' (H3K56ac).</text>
</comment>
<comment type="disruption phenotype">
    <text evidence="5">Monkeys die soon after birth and exhibit severe prenatal developmental retardation (PubMed:30135584). The molecular developmental stage of the monkeys mimics that of wild-type fetuses at 2-4 months of gestational age (PubMed:30135584). Neuronal differentiation is strongly delayed, due to hyperacetylation of histone H3 at 'Lys-56' (H3K56ac), leading to up-regulation of the long non-coding RNA H19 (PubMed:30135584).</text>
</comment>
<comment type="similarity">
    <text evidence="7">Belongs to the sirtuin family. Class IV subfamily.</text>
</comment>
<dbReference type="EC" id="2.3.1.-" evidence="2"/>
<dbReference type="EC" id="2.3.1.286" evidence="3 5"/>
<dbReference type="EC" id="2.4.2.-" evidence="2"/>
<dbReference type="SMR" id="A0A2K5TU92"/>
<dbReference type="STRING" id="9541.ENSMFAP00000003631"/>
<dbReference type="Ensembl" id="ENSMFAT00000022292.2">
    <property type="protein sequence ID" value="ENSMFAP00000003631.2"/>
    <property type="gene ID" value="ENSMFAG00000001546.2"/>
</dbReference>
<dbReference type="VEuPathDB" id="HostDB:ENSMFAG00000001546"/>
<dbReference type="GeneTree" id="ENSGT00940000160088"/>
<dbReference type="Proteomes" id="UP000233100">
    <property type="component" value="Chromosome 19"/>
</dbReference>
<dbReference type="Bgee" id="ENSMFAG00000001546">
    <property type="expression patterns" value="Expressed in colon and 13 other cell types or tissues"/>
</dbReference>
<dbReference type="GO" id="GO:0000785">
    <property type="term" value="C:chromatin"/>
    <property type="evidence" value="ECO:0000250"/>
    <property type="project" value="UniProtKB"/>
</dbReference>
<dbReference type="GO" id="GO:0099115">
    <property type="term" value="C:chromosome, subtelomeric region"/>
    <property type="evidence" value="ECO:0007669"/>
    <property type="project" value="Ensembl"/>
</dbReference>
<dbReference type="GO" id="GO:0005783">
    <property type="term" value="C:endoplasmic reticulum"/>
    <property type="evidence" value="ECO:0000250"/>
    <property type="project" value="UniProtKB"/>
</dbReference>
<dbReference type="GO" id="GO:0005654">
    <property type="term" value="C:nucleoplasm"/>
    <property type="evidence" value="ECO:0007669"/>
    <property type="project" value="Ensembl"/>
</dbReference>
<dbReference type="GO" id="GO:0005634">
    <property type="term" value="C:nucleus"/>
    <property type="evidence" value="ECO:0000250"/>
    <property type="project" value="UniProtKB"/>
</dbReference>
<dbReference type="GO" id="GO:0005721">
    <property type="term" value="C:pericentric heterochromatin"/>
    <property type="evidence" value="ECO:0007669"/>
    <property type="project" value="Ensembl"/>
</dbReference>
<dbReference type="GO" id="GO:0035861">
    <property type="term" value="C:site of double-strand break"/>
    <property type="evidence" value="ECO:0007669"/>
    <property type="project" value="Ensembl"/>
</dbReference>
<dbReference type="GO" id="GO:0031490">
    <property type="term" value="F:chromatin DNA binding"/>
    <property type="evidence" value="ECO:0000250"/>
    <property type="project" value="UniProtKB"/>
</dbReference>
<dbReference type="GO" id="GO:0003684">
    <property type="term" value="F:damaged DNA binding"/>
    <property type="evidence" value="ECO:0000250"/>
    <property type="project" value="UniProtKB"/>
</dbReference>
<dbReference type="GO" id="GO:0140612">
    <property type="term" value="F:DNA damage sensor activity"/>
    <property type="evidence" value="ECO:0000250"/>
    <property type="project" value="UniProtKB"/>
</dbReference>
<dbReference type="GO" id="GO:0035033">
    <property type="term" value="F:histone deacetylase regulator activity"/>
    <property type="evidence" value="ECO:0007669"/>
    <property type="project" value="Ensembl"/>
</dbReference>
<dbReference type="GO" id="GO:0097372">
    <property type="term" value="F:histone H3K18 deacetylase activity, NAD-dependent"/>
    <property type="evidence" value="ECO:0000250"/>
    <property type="project" value="UniProtKB"/>
</dbReference>
<dbReference type="GO" id="GO:0140765">
    <property type="term" value="F:histone H3K56 deacetylase activity, NAD-dependent"/>
    <property type="evidence" value="ECO:0000314"/>
    <property type="project" value="UniProtKB"/>
</dbReference>
<dbReference type="GO" id="GO:0046969">
    <property type="term" value="F:histone H3K9 deacetylase activity, NAD-dependent"/>
    <property type="evidence" value="ECO:0000250"/>
    <property type="project" value="UniProtKB"/>
</dbReference>
<dbReference type="GO" id="GO:0106222">
    <property type="term" value="F:lncRNA binding"/>
    <property type="evidence" value="ECO:0007669"/>
    <property type="project" value="Ensembl"/>
</dbReference>
<dbReference type="GO" id="GO:0046872">
    <property type="term" value="F:metal ion binding"/>
    <property type="evidence" value="ECO:0007669"/>
    <property type="project" value="UniProtKB-KW"/>
</dbReference>
<dbReference type="GO" id="GO:0070403">
    <property type="term" value="F:NAD+ binding"/>
    <property type="evidence" value="ECO:0007669"/>
    <property type="project" value="InterPro"/>
</dbReference>
<dbReference type="GO" id="GO:0106274">
    <property type="term" value="F:NAD+-protein-arginine ADP-ribosyltransferase activity"/>
    <property type="evidence" value="ECO:0000250"/>
    <property type="project" value="UniProtKB"/>
</dbReference>
<dbReference type="GO" id="GO:0140773">
    <property type="term" value="F:NAD-dependent protein demyristoylase activity"/>
    <property type="evidence" value="ECO:0000250"/>
    <property type="project" value="UniProtKB"/>
</dbReference>
<dbReference type="GO" id="GO:0140774">
    <property type="term" value="F:NAD-dependent protein depalmitoylase activity"/>
    <property type="evidence" value="ECO:0000250"/>
    <property type="project" value="UniProtKB"/>
</dbReference>
<dbReference type="GO" id="GO:0034979">
    <property type="term" value="F:NAD-dependent protein lysine deacetylase activity"/>
    <property type="evidence" value="ECO:0000250"/>
    <property type="project" value="UniProtKB"/>
</dbReference>
<dbReference type="GO" id="GO:0031491">
    <property type="term" value="F:nucleosome binding"/>
    <property type="evidence" value="ECO:0000250"/>
    <property type="project" value="UniProtKB"/>
</dbReference>
<dbReference type="GO" id="GO:0016779">
    <property type="term" value="F:nucleotidyltransferase activity"/>
    <property type="evidence" value="ECO:0007669"/>
    <property type="project" value="UniProtKB-KW"/>
</dbReference>
<dbReference type="GO" id="GO:0042803">
    <property type="term" value="F:protein homodimerization activity"/>
    <property type="evidence" value="ECO:0000250"/>
    <property type="project" value="UniProtKB"/>
</dbReference>
<dbReference type="GO" id="GO:1904841">
    <property type="term" value="F:TORC2 complex binding"/>
    <property type="evidence" value="ECO:0000250"/>
    <property type="project" value="UniProtKB"/>
</dbReference>
<dbReference type="GO" id="GO:0003714">
    <property type="term" value="F:transcription corepressor activity"/>
    <property type="evidence" value="ECO:0007669"/>
    <property type="project" value="TreeGrafter"/>
</dbReference>
<dbReference type="GO" id="GO:0055007">
    <property type="term" value="P:cardiac muscle cell differentiation"/>
    <property type="evidence" value="ECO:0000250"/>
    <property type="project" value="UniProtKB"/>
</dbReference>
<dbReference type="GO" id="GO:0032922">
    <property type="term" value="P:circadian regulation of gene expression"/>
    <property type="evidence" value="ECO:0000250"/>
    <property type="project" value="UniProtKB"/>
</dbReference>
<dbReference type="GO" id="GO:0008340">
    <property type="term" value="P:determination of adult lifespan"/>
    <property type="evidence" value="ECO:0007669"/>
    <property type="project" value="Ensembl"/>
</dbReference>
<dbReference type="GO" id="GO:0006302">
    <property type="term" value="P:double-strand break repair"/>
    <property type="evidence" value="ECO:0000250"/>
    <property type="project" value="UniProtKB"/>
</dbReference>
<dbReference type="GO" id="GO:0042181">
    <property type="term" value="P:ketone biosynthetic process"/>
    <property type="evidence" value="ECO:0000250"/>
    <property type="project" value="UniProtKB"/>
</dbReference>
<dbReference type="GO" id="GO:2000773">
    <property type="term" value="P:negative regulation of cellular senescence"/>
    <property type="evidence" value="ECO:0007669"/>
    <property type="project" value="Ensembl"/>
</dbReference>
<dbReference type="GO" id="GO:0045721">
    <property type="term" value="P:negative regulation of gluconeogenesis"/>
    <property type="evidence" value="ECO:0000250"/>
    <property type="project" value="UniProtKB"/>
</dbReference>
<dbReference type="GO" id="GO:0045820">
    <property type="term" value="P:negative regulation of glycolytic process"/>
    <property type="evidence" value="ECO:0000250"/>
    <property type="project" value="UniProtKB"/>
</dbReference>
<dbReference type="GO" id="GO:0042308">
    <property type="term" value="P:negative regulation of protein import into nucleus"/>
    <property type="evidence" value="ECO:0000250"/>
    <property type="project" value="UniProtKB"/>
</dbReference>
<dbReference type="GO" id="GO:0120186">
    <property type="term" value="P:negative regulation of protein localization to chromatin"/>
    <property type="evidence" value="ECO:0007669"/>
    <property type="project" value="Ensembl"/>
</dbReference>
<dbReference type="GO" id="GO:0000122">
    <property type="term" value="P:negative regulation of transcription by RNA polymerase II"/>
    <property type="evidence" value="ECO:0000315"/>
    <property type="project" value="UniProtKB"/>
</dbReference>
<dbReference type="GO" id="GO:0034244">
    <property type="term" value="P:negative regulation of transcription elongation by RNA polymerase II"/>
    <property type="evidence" value="ECO:0000250"/>
    <property type="project" value="UniProtKB"/>
</dbReference>
<dbReference type="GO" id="GO:0030182">
    <property type="term" value="P:neuron differentiation"/>
    <property type="evidence" value="ECO:0000315"/>
    <property type="project" value="UniProtKB"/>
</dbReference>
<dbReference type="GO" id="GO:0031508">
    <property type="term" value="P:pericentric heterochromatin formation"/>
    <property type="evidence" value="ECO:0000250"/>
    <property type="project" value="UniProtKB"/>
</dbReference>
<dbReference type="GO" id="GO:1905555">
    <property type="term" value="P:positive regulation of blood vessel branching"/>
    <property type="evidence" value="ECO:0007669"/>
    <property type="project" value="Ensembl"/>
</dbReference>
<dbReference type="GO" id="GO:1902732">
    <property type="term" value="P:positive regulation of chondrocyte proliferation"/>
    <property type="evidence" value="ECO:0007669"/>
    <property type="project" value="Ensembl"/>
</dbReference>
<dbReference type="GO" id="GO:0120162">
    <property type="term" value="P:positive regulation of cold-induced thermogenesis"/>
    <property type="evidence" value="ECO:0000250"/>
    <property type="project" value="UniProtKB"/>
</dbReference>
<dbReference type="GO" id="GO:2000781">
    <property type="term" value="P:positive regulation of double-strand break repair"/>
    <property type="evidence" value="ECO:0000250"/>
    <property type="project" value="UniProtKB"/>
</dbReference>
<dbReference type="GO" id="GO:0045600">
    <property type="term" value="P:positive regulation of fat cell differentiation"/>
    <property type="evidence" value="ECO:0000250"/>
    <property type="project" value="UniProtKB"/>
</dbReference>
<dbReference type="GO" id="GO:0032024">
    <property type="term" value="P:positive regulation of insulin secretion"/>
    <property type="evidence" value="ECO:0000250"/>
    <property type="project" value="UniProtKB"/>
</dbReference>
<dbReference type="GO" id="GO:0032436">
    <property type="term" value="P:positive regulation of proteasomal ubiquitin-dependent protein catabolic process"/>
    <property type="evidence" value="ECO:0007669"/>
    <property type="project" value="Ensembl"/>
</dbReference>
<dbReference type="GO" id="GO:0046827">
    <property type="term" value="P:positive regulation of protein export from nucleus"/>
    <property type="evidence" value="ECO:0000250"/>
    <property type="project" value="UniProtKB"/>
</dbReference>
<dbReference type="GO" id="GO:0120187">
    <property type="term" value="P:positive regulation of protein localization to chromatin"/>
    <property type="evidence" value="ECO:0000250"/>
    <property type="project" value="UniProtKB"/>
</dbReference>
<dbReference type="GO" id="GO:2000738">
    <property type="term" value="P:positive regulation of stem cell differentiation"/>
    <property type="evidence" value="ECO:0000250"/>
    <property type="project" value="UniProtKB"/>
</dbReference>
<dbReference type="GO" id="GO:1902459">
    <property type="term" value="P:positive regulation of stem cell population maintenance"/>
    <property type="evidence" value="ECO:0007669"/>
    <property type="project" value="Ensembl"/>
</dbReference>
<dbReference type="GO" id="GO:0032206">
    <property type="term" value="P:positive regulation of telomere maintenance"/>
    <property type="evidence" value="ECO:0007669"/>
    <property type="project" value="Ensembl"/>
</dbReference>
<dbReference type="GO" id="GO:1905564">
    <property type="term" value="P:positive regulation of vascular endothelial cell proliferation"/>
    <property type="evidence" value="ECO:0007669"/>
    <property type="project" value="Ensembl"/>
</dbReference>
<dbReference type="GO" id="GO:0051697">
    <property type="term" value="P:protein delipidation"/>
    <property type="evidence" value="ECO:0000250"/>
    <property type="project" value="UniProtKB"/>
</dbReference>
<dbReference type="GO" id="GO:0031648">
    <property type="term" value="P:protein destabilization"/>
    <property type="evidence" value="ECO:0000250"/>
    <property type="project" value="UniProtKB"/>
</dbReference>
<dbReference type="GO" id="GO:0006606">
    <property type="term" value="P:protein import into nucleus"/>
    <property type="evidence" value="ECO:0007669"/>
    <property type="project" value="Ensembl"/>
</dbReference>
<dbReference type="GO" id="GO:1990166">
    <property type="term" value="P:protein localization to site of double-strand break"/>
    <property type="evidence" value="ECO:0007669"/>
    <property type="project" value="Ensembl"/>
</dbReference>
<dbReference type="GO" id="GO:0042752">
    <property type="term" value="P:regulation of circadian rhythm"/>
    <property type="evidence" value="ECO:0000250"/>
    <property type="project" value="UniProtKB"/>
</dbReference>
<dbReference type="GO" id="GO:0010569">
    <property type="term" value="P:regulation of double-strand break repair via homologous recombination"/>
    <property type="evidence" value="ECO:0000250"/>
    <property type="project" value="UniProtKB"/>
</dbReference>
<dbReference type="GO" id="GO:0050994">
    <property type="term" value="P:regulation of lipid catabolic process"/>
    <property type="evidence" value="ECO:0000250"/>
    <property type="project" value="UniProtKB"/>
</dbReference>
<dbReference type="GO" id="GO:0019216">
    <property type="term" value="P:regulation of lipid metabolic process"/>
    <property type="evidence" value="ECO:0000250"/>
    <property type="project" value="UniProtKB"/>
</dbReference>
<dbReference type="GO" id="GO:1903076">
    <property type="term" value="P:regulation of protein localization to plasma membrane"/>
    <property type="evidence" value="ECO:0007669"/>
    <property type="project" value="Ensembl"/>
</dbReference>
<dbReference type="GO" id="GO:0009411">
    <property type="term" value="P:response to UV"/>
    <property type="evidence" value="ECO:0007669"/>
    <property type="project" value="Ensembl"/>
</dbReference>
<dbReference type="GO" id="GO:0031509">
    <property type="term" value="P:subtelomeric heterochromatin formation"/>
    <property type="evidence" value="ECO:0007669"/>
    <property type="project" value="Ensembl"/>
</dbReference>
<dbReference type="GO" id="GO:0010526">
    <property type="term" value="P:transposable element silencing"/>
    <property type="evidence" value="ECO:0000250"/>
    <property type="project" value="UniProtKB"/>
</dbReference>
<dbReference type="CDD" id="cd01410">
    <property type="entry name" value="SIRT7"/>
    <property type="match status" value="1"/>
</dbReference>
<dbReference type="FunFam" id="2.20.28.200:FF:000001">
    <property type="entry name" value="NAD-dependent protein deacetylase sirtuin-6"/>
    <property type="match status" value="1"/>
</dbReference>
<dbReference type="FunFam" id="3.40.50.1220:FF:000029">
    <property type="entry name" value="NAD-dependent protein deacetylase sirtuin-6 isoform X2"/>
    <property type="match status" value="1"/>
</dbReference>
<dbReference type="FunFam" id="3.40.50.1220:FF:000038">
    <property type="entry name" value="NAD-dependent protein deacetylase sirtuin-6 isoform X2"/>
    <property type="match status" value="1"/>
</dbReference>
<dbReference type="Gene3D" id="2.20.28.200">
    <property type="match status" value="1"/>
</dbReference>
<dbReference type="Gene3D" id="3.40.50.1220">
    <property type="entry name" value="TPP-binding domain"/>
    <property type="match status" value="1"/>
</dbReference>
<dbReference type="InterPro" id="IPR029035">
    <property type="entry name" value="DHS-like_NAD/FAD-binding_dom"/>
</dbReference>
<dbReference type="InterPro" id="IPR050134">
    <property type="entry name" value="NAD-dep_sirtuin_deacylases"/>
</dbReference>
<dbReference type="InterPro" id="IPR003000">
    <property type="entry name" value="Sirtuin"/>
</dbReference>
<dbReference type="InterPro" id="IPR026590">
    <property type="entry name" value="Ssirtuin_cat_dom"/>
</dbReference>
<dbReference type="PANTHER" id="PTHR11085">
    <property type="entry name" value="NAD-DEPENDENT PROTEIN DEACYLASE SIRTUIN-5, MITOCHONDRIAL-RELATED"/>
    <property type="match status" value="1"/>
</dbReference>
<dbReference type="PANTHER" id="PTHR11085:SF12">
    <property type="entry name" value="NAD-DEPENDENT PROTEIN DEACYLASE SIRTUIN-6"/>
    <property type="match status" value="1"/>
</dbReference>
<dbReference type="Pfam" id="PF02146">
    <property type="entry name" value="SIR2"/>
    <property type="match status" value="1"/>
</dbReference>
<dbReference type="SUPFAM" id="SSF52467">
    <property type="entry name" value="DHS-like NAD/FAD-binding domain"/>
    <property type="match status" value="1"/>
</dbReference>
<dbReference type="PROSITE" id="PS50305">
    <property type="entry name" value="SIRTUIN"/>
    <property type="match status" value="1"/>
</dbReference>
<name>SIR6_MACFA</name>